<evidence type="ECO:0000255" key="1">
    <source>
        <dbReference type="HAMAP-Rule" id="MF_01023"/>
    </source>
</evidence>
<proteinExistence type="inferred from homology"/>
<feature type="chain" id="PRO_0000319782" description="Histidinol-phosphate aminotransferase">
    <location>
        <begin position="1"/>
        <end position="365"/>
    </location>
</feature>
<feature type="modified residue" description="N6-(pyridoxal phosphate)lysine" evidence="1">
    <location>
        <position position="227"/>
    </location>
</feature>
<reference key="1">
    <citation type="journal article" date="2009" name="Environ. Microbiol.">
        <title>The genome of Polaromonas naphthalenivorans strain CJ2, isolated from coal tar-contaminated sediment, reveals physiological and metabolic versatility and evolution through extensive horizontal gene transfer.</title>
        <authorList>
            <person name="Yagi J.M."/>
            <person name="Sims D."/>
            <person name="Brettin T."/>
            <person name="Bruce D."/>
            <person name="Madsen E.L."/>
        </authorList>
    </citation>
    <scope>NUCLEOTIDE SEQUENCE [LARGE SCALE GENOMIC DNA]</scope>
    <source>
        <strain>CJ2</strain>
    </source>
</reference>
<organism>
    <name type="scientific">Polaromonas naphthalenivorans (strain CJ2)</name>
    <dbReference type="NCBI Taxonomy" id="365044"/>
    <lineage>
        <taxon>Bacteria</taxon>
        <taxon>Pseudomonadati</taxon>
        <taxon>Pseudomonadota</taxon>
        <taxon>Betaproteobacteria</taxon>
        <taxon>Burkholderiales</taxon>
        <taxon>Comamonadaceae</taxon>
        <taxon>Polaromonas</taxon>
    </lineage>
</organism>
<name>HIS8_POLNA</name>
<dbReference type="EC" id="2.6.1.9" evidence="1"/>
<dbReference type="EMBL" id="CP000529">
    <property type="protein sequence ID" value="ABM36016.1"/>
    <property type="molecule type" value="Genomic_DNA"/>
</dbReference>
<dbReference type="RefSeq" id="WP_011800111.1">
    <property type="nucleotide sequence ID" value="NC_008781.1"/>
</dbReference>
<dbReference type="SMR" id="A1VK38"/>
<dbReference type="STRING" id="365044.Pnap_0697"/>
<dbReference type="KEGG" id="pna:Pnap_0697"/>
<dbReference type="eggNOG" id="COG0079">
    <property type="taxonomic scope" value="Bacteria"/>
</dbReference>
<dbReference type="HOGENOM" id="CLU_017584_3_1_4"/>
<dbReference type="OrthoDB" id="9813612at2"/>
<dbReference type="UniPathway" id="UPA00031">
    <property type="reaction ID" value="UER00012"/>
</dbReference>
<dbReference type="Proteomes" id="UP000000644">
    <property type="component" value="Chromosome"/>
</dbReference>
<dbReference type="GO" id="GO:0004400">
    <property type="term" value="F:histidinol-phosphate transaminase activity"/>
    <property type="evidence" value="ECO:0007669"/>
    <property type="project" value="UniProtKB-UniRule"/>
</dbReference>
<dbReference type="GO" id="GO:0030170">
    <property type="term" value="F:pyridoxal phosphate binding"/>
    <property type="evidence" value="ECO:0007669"/>
    <property type="project" value="InterPro"/>
</dbReference>
<dbReference type="GO" id="GO:0000105">
    <property type="term" value="P:L-histidine biosynthetic process"/>
    <property type="evidence" value="ECO:0007669"/>
    <property type="project" value="UniProtKB-UniRule"/>
</dbReference>
<dbReference type="CDD" id="cd00609">
    <property type="entry name" value="AAT_like"/>
    <property type="match status" value="1"/>
</dbReference>
<dbReference type="Gene3D" id="3.90.1150.10">
    <property type="entry name" value="Aspartate Aminotransferase, domain 1"/>
    <property type="match status" value="1"/>
</dbReference>
<dbReference type="Gene3D" id="3.40.640.10">
    <property type="entry name" value="Type I PLP-dependent aspartate aminotransferase-like (Major domain)"/>
    <property type="match status" value="1"/>
</dbReference>
<dbReference type="HAMAP" id="MF_01023">
    <property type="entry name" value="HisC_aminotrans_2"/>
    <property type="match status" value="1"/>
</dbReference>
<dbReference type="InterPro" id="IPR004839">
    <property type="entry name" value="Aminotransferase_I/II_large"/>
</dbReference>
<dbReference type="InterPro" id="IPR005861">
    <property type="entry name" value="HisP_aminotrans"/>
</dbReference>
<dbReference type="InterPro" id="IPR015424">
    <property type="entry name" value="PyrdxlP-dep_Trfase"/>
</dbReference>
<dbReference type="InterPro" id="IPR015421">
    <property type="entry name" value="PyrdxlP-dep_Trfase_major"/>
</dbReference>
<dbReference type="InterPro" id="IPR015422">
    <property type="entry name" value="PyrdxlP-dep_Trfase_small"/>
</dbReference>
<dbReference type="NCBIfam" id="TIGR01141">
    <property type="entry name" value="hisC"/>
    <property type="match status" value="1"/>
</dbReference>
<dbReference type="PANTHER" id="PTHR42885:SF2">
    <property type="entry name" value="HISTIDINOL-PHOSPHATE AMINOTRANSFERASE"/>
    <property type="match status" value="1"/>
</dbReference>
<dbReference type="PANTHER" id="PTHR42885">
    <property type="entry name" value="HISTIDINOL-PHOSPHATE AMINOTRANSFERASE-RELATED"/>
    <property type="match status" value="1"/>
</dbReference>
<dbReference type="Pfam" id="PF00155">
    <property type="entry name" value="Aminotran_1_2"/>
    <property type="match status" value="1"/>
</dbReference>
<dbReference type="SUPFAM" id="SSF53383">
    <property type="entry name" value="PLP-dependent transferases"/>
    <property type="match status" value="1"/>
</dbReference>
<sequence>MTAPDSTLDPKLKKLIRQDVQSMHAYAIQESSGMVKLDAMENPHRLPAGLQAELGQRLGALALNRYPDGRVNDLRRALADYAQMPEGFDIMLGNGSDELIALLALACDVPGGSVLAPLPGFVMYAMSAQLQGLKFIGVDLTPDFELDEAAMLAAIAEHKPSITYLAYPNNPTANLWDDAVIENIINAVGEQGGLVVIDEAYQPFASKSYAGRMARHSHVLLMRTLSKFGLAGVRLGYMMGPKALIAEIDKVRPPYNISVLNYECALFALEHREVFAAQAQDVVAQRAVLFNALSALPGVKAWHSDANMILIRVPDAARAFEGLRNRKVLIKNISKMHPLLANCLRLTVGTAEENAQLLAALEPSL</sequence>
<keyword id="KW-0028">Amino-acid biosynthesis</keyword>
<keyword id="KW-0032">Aminotransferase</keyword>
<keyword id="KW-0368">Histidine biosynthesis</keyword>
<keyword id="KW-0663">Pyridoxal phosphate</keyword>
<keyword id="KW-1185">Reference proteome</keyword>
<keyword id="KW-0808">Transferase</keyword>
<accession>A1VK38</accession>
<protein>
    <recommendedName>
        <fullName evidence="1">Histidinol-phosphate aminotransferase</fullName>
        <ecNumber evidence="1">2.6.1.9</ecNumber>
    </recommendedName>
    <alternativeName>
        <fullName evidence="1">Imidazole acetol-phosphate transaminase</fullName>
    </alternativeName>
</protein>
<gene>
    <name evidence="1" type="primary">hisC</name>
    <name type="ordered locus">Pnap_0697</name>
</gene>
<comment type="catalytic activity">
    <reaction evidence="1">
        <text>L-histidinol phosphate + 2-oxoglutarate = 3-(imidazol-4-yl)-2-oxopropyl phosphate + L-glutamate</text>
        <dbReference type="Rhea" id="RHEA:23744"/>
        <dbReference type="ChEBI" id="CHEBI:16810"/>
        <dbReference type="ChEBI" id="CHEBI:29985"/>
        <dbReference type="ChEBI" id="CHEBI:57766"/>
        <dbReference type="ChEBI" id="CHEBI:57980"/>
        <dbReference type="EC" id="2.6.1.9"/>
    </reaction>
</comment>
<comment type="cofactor">
    <cofactor evidence="1">
        <name>pyridoxal 5'-phosphate</name>
        <dbReference type="ChEBI" id="CHEBI:597326"/>
    </cofactor>
</comment>
<comment type="pathway">
    <text evidence="1">Amino-acid biosynthesis; L-histidine biosynthesis; L-histidine from 5-phospho-alpha-D-ribose 1-diphosphate: step 7/9.</text>
</comment>
<comment type="subunit">
    <text evidence="1">Homodimer.</text>
</comment>
<comment type="similarity">
    <text evidence="1">Belongs to the class-II pyridoxal-phosphate-dependent aminotransferase family. Histidinol-phosphate aminotransferase subfamily.</text>
</comment>